<keyword id="KW-0119">Carbohydrate metabolism</keyword>
<keyword id="KW-0210">Decarboxylase</keyword>
<keyword id="KW-0456">Lyase</keyword>
<keyword id="KW-0460">Magnesium</keyword>
<keyword id="KW-0479">Metal-binding</keyword>
<keyword id="KW-1185">Reference proteome</keyword>
<name>ULAD_ECO57</name>
<accession>Q8XDI7</accession>
<accession>Q7A8U7</accession>
<dbReference type="EC" id="4.1.1.85" evidence="1"/>
<dbReference type="EMBL" id="AE005174">
    <property type="protein sequence ID" value="AAG59392.1"/>
    <property type="molecule type" value="Genomic_DNA"/>
</dbReference>
<dbReference type="EMBL" id="BA000007">
    <property type="protein sequence ID" value="BAB38595.1"/>
    <property type="molecule type" value="Genomic_DNA"/>
</dbReference>
<dbReference type="PIR" id="D86116">
    <property type="entry name" value="D86116"/>
</dbReference>
<dbReference type="PIR" id="D91275">
    <property type="entry name" value="D91275"/>
</dbReference>
<dbReference type="RefSeq" id="NP_313199.1">
    <property type="nucleotide sequence ID" value="NC_002695.1"/>
</dbReference>
<dbReference type="RefSeq" id="WP_000056760.1">
    <property type="nucleotide sequence ID" value="NZ_VOAI01000008.1"/>
</dbReference>
<dbReference type="SMR" id="Q8XDI7"/>
<dbReference type="STRING" id="155864.Z5805"/>
<dbReference type="GeneID" id="75202430"/>
<dbReference type="GeneID" id="913999"/>
<dbReference type="KEGG" id="ece:Z5805"/>
<dbReference type="KEGG" id="ecs:ECs_5172"/>
<dbReference type="PATRIC" id="fig|386585.9.peg.5406"/>
<dbReference type="eggNOG" id="COG0269">
    <property type="taxonomic scope" value="Bacteria"/>
</dbReference>
<dbReference type="HOGENOM" id="CLU_081825_0_0_6"/>
<dbReference type="OMA" id="WEQAQEW"/>
<dbReference type="UniPathway" id="UPA00263">
    <property type="reaction ID" value="UER00378"/>
</dbReference>
<dbReference type="Proteomes" id="UP000000558">
    <property type="component" value="Chromosome"/>
</dbReference>
<dbReference type="Proteomes" id="UP000002519">
    <property type="component" value="Chromosome"/>
</dbReference>
<dbReference type="GO" id="GO:0033982">
    <property type="term" value="F:3-dehydro-L-gulonate-6-phosphate decarboxylase activity"/>
    <property type="evidence" value="ECO:0007669"/>
    <property type="project" value="UniProtKB-EC"/>
</dbReference>
<dbReference type="GO" id="GO:0000287">
    <property type="term" value="F:magnesium ion binding"/>
    <property type="evidence" value="ECO:0007669"/>
    <property type="project" value="UniProtKB-UniRule"/>
</dbReference>
<dbReference type="GO" id="GO:0004590">
    <property type="term" value="F:orotidine-5'-phosphate decarboxylase activity"/>
    <property type="evidence" value="ECO:0007669"/>
    <property type="project" value="InterPro"/>
</dbReference>
<dbReference type="GO" id="GO:0006207">
    <property type="term" value="P:'de novo' pyrimidine nucleobase biosynthetic process"/>
    <property type="evidence" value="ECO:0007669"/>
    <property type="project" value="InterPro"/>
</dbReference>
<dbReference type="GO" id="GO:0019854">
    <property type="term" value="P:L-ascorbic acid catabolic process"/>
    <property type="evidence" value="ECO:0007669"/>
    <property type="project" value="UniProtKB-UniRule"/>
</dbReference>
<dbReference type="CDD" id="cd04726">
    <property type="entry name" value="KGPDC_HPS"/>
    <property type="match status" value="1"/>
</dbReference>
<dbReference type="FunFam" id="3.20.20.70:FF:000022">
    <property type="entry name" value="3-keto-L-gulonate-6-phosphate decarboxylase UlaD"/>
    <property type="match status" value="1"/>
</dbReference>
<dbReference type="Gene3D" id="3.20.20.70">
    <property type="entry name" value="Aldolase class I"/>
    <property type="match status" value="1"/>
</dbReference>
<dbReference type="HAMAP" id="MF_01267">
    <property type="entry name" value="UlaD"/>
    <property type="match status" value="1"/>
</dbReference>
<dbReference type="InterPro" id="IPR023942">
    <property type="entry name" value="3-keto-L-gulonate6Pdecase_UlaD"/>
</dbReference>
<dbReference type="InterPro" id="IPR013785">
    <property type="entry name" value="Aldolase_TIM"/>
</dbReference>
<dbReference type="InterPro" id="IPR041710">
    <property type="entry name" value="HPS/KGPDC"/>
</dbReference>
<dbReference type="InterPro" id="IPR001754">
    <property type="entry name" value="OMPdeCOase_dom"/>
</dbReference>
<dbReference type="InterPro" id="IPR011060">
    <property type="entry name" value="RibuloseP-bd_barrel"/>
</dbReference>
<dbReference type="NCBIfam" id="NF009832">
    <property type="entry name" value="PRK13306.1"/>
    <property type="match status" value="1"/>
</dbReference>
<dbReference type="PANTHER" id="PTHR35039">
    <property type="entry name" value="3-KETO-L-GULONATE-6-PHOSPHATE DECARBOXYLASE SGBH-RELATED"/>
    <property type="match status" value="1"/>
</dbReference>
<dbReference type="PANTHER" id="PTHR35039:SF3">
    <property type="entry name" value="3-KETO-L-GULONATE-6-PHOSPHATE DECARBOXYLASE SGBH-RELATED"/>
    <property type="match status" value="1"/>
</dbReference>
<dbReference type="Pfam" id="PF00215">
    <property type="entry name" value="OMPdecase"/>
    <property type="match status" value="1"/>
</dbReference>
<dbReference type="SMART" id="SM00934">
    <property type="entry name" value="OMPdecase"/>
    <property type="match status" value="1"/>
</dbReference>
<dbReference type="SUPFAM" id="SSF51366">
    <property type="entry name" value="Ribulose-phoshate binding barrel"/>
    <property type="match status" value="1"/>
</dbReference>
<protein>
    <recommendedName>
        <fullName evidence="1">3-keto-L-gulonate-6-phosphate decarboxylase UlaD</fullName>
        <ecNumber evidence="1">4.1.1.85</ecNumber>
    </recommendedName>
    <alternativeName>
        <fullName evidence="1">3-dehydro-L-gulonate-6-phosphate decarboxylase</fullName>
    </alternativeName>
    <alternativeName>
        <fullName evidence="1">KGPDC</fullName>
    </alternativeName>
    <alternativeName>
        <fullName evidence="1">L-ascorbate utilization protein D</fullName>
    </alternativeName>
</protein>
<organism>
    <name type="scientific">Escherichia coli O157:H7</name>
    <dbReference type="NCBI Taxonomy" id="83334"/>
    <lineage>
        <taxon>Bacteria</taxon>
        <taxon>Pseudomonadati</taxon>
        <taxon>Pseudomonadota</taxon>
        <taxon>Gammaproteobacteria</taxon>
        <taxon>Enterobacterales</taxon>
        <taxon>Enterobacteriaceae</taxon>
        <taxon>Escherichia</taxon>
    </lineage>
</organism>
<feature type="chain" id="PRO_0000236089" description="3-keto-L-gulonate-6-phosphate decarboxylase UlaD">
    <location>
        <begin position="1"/>
        <end position="216"/>
    </location>
</feature>
<feature type="binding site" evidence="1">
    <location>
        <position position="11"/>
    </location>
    <ligand>
        <name>substrate</name>
    </ligand>
</feature>
<feature type="binding site" evidence="1">
    <location>
        <position position="33"/>
    </location>
    <ligand>
        <name>Mg(2+)</name>
        <dbReference type="ChEBI" id="CHEBI:18420"/>
    </ligand>
</feature>
<feature type="binding site" evidence="1">
    <location>
        <position position="62"/>
    </location>
    <ligand>
        <name>Mg(2+)</name>
        <dbReference type="ChEBI" id="CHEBI:18420"/>
    </ligand>
</feature>
<feature type="binding site" evidence="1">
    <location>
        <position position="192"/>
    </location>
    <ligand>
        <name>substrate</name>
    </ligand>
</feature>
<feature type="site" description="Transition state stabilizer" evidence="1">
    <location>
        <position position="64"/>
    </location>
</feature>
<feature type="site" description="Transition state stabilizer" evidence="1">
    <location>
        <position position="67"/>
    </location>
</feature>
<proteinExistence type="inferred from homology"/>
<gene>
    <name evidence="1" type="primary">ulaD</name>
    <name type="ordered locus">Z5805</name>
    <name type="ordered locus">ECs5172</name>
</gene>
<comment type="function">
    <text evidence="1">Catalyzes the decarboxylation of 3-keto-L-gulonate-6-P into L-xylulose-5-P. Is involved in the anaerobic L-ascorbate utilization.</text>
</comment>
<comment type="catalytic activity">
    <reaction evidence="1">
        <text>3-dehydro-L-gulonate 6-phosphate + H(+) = L-xylulose 5-phosphate + CO2</text>
        <dbReference type="Rhea" id="RHEA:14353"/>
        <dbReference type="ChEBI" id="CHEBI:15378"/>
        <dbReference type="ChEBI" id="CHEBI:16526"/>
        <dbReference type="ChEBI" id="CHEBI:57829"/>
        <dbReference type="ChEBI" id="CHEBI:58774"/>
        <dbReference type="EC" id="4.1.1.85"/>
    </reaction>
</comment>
<comment type="cofactor">
    <cofactor evidence="1">
        <name>Mg(2+)</name>
        <dbReference type="ChEBI" id="CHEBI:18420"/>
    </cofactor>
    <text evidence="1">Binds 1 Mg(2+) ion per subunit.</text>
</comment>
<comment type="pathway">
    <text evidence="1">Cofactor degradation; L-ascorbate degradation; D-xylulose 5-phosphate from L-ascorbate: step 2/4.</text>
</comment>
<comment type="subunit">
    <text evidence="1">Homodimer.</text>
</comment>
<comment type="induction">
    <text evidence="1">Induced by L-ascorbate. Repressed by UlaR.</text>
</comment>
<comment type="similarity">
    <text evidence="1">Belongs to the HPS/KGPDC family. KGPDC subfamily.</text>
</comment>
<sequence length="216" mass="23649">MSLPMLQVALDNQTMDSAYETTRLIAEEVDIIEVGTILCVGEGVRAVRDLKALYPHKIVLADAKIADAGKILSRMCFEANADWVTVICCADINTAKGALDVAKEFNGDVQIELTGYWTWEQAQQWRDAGIQQVVYHRSRDAQAAGVAWGEADITAIKRLSDMGFKVTVTGGLALEDLPLFKGIPIHVFIAGRSIRDAASPVEAARQFKRSIAELWG</sequence>
<reference key="1">
    <citation type="journal article" date="2001" name="Nature">
        <title>Genome sequence of enterohaemorrhagic Escherichia coli O157:H7.</title>
        <authorList>
            <person name="Perna N.T."/>
            <person name="Plunkett G. III"/>
            <person name="Burland V."/>
            <person name="Mau B."/>
            <person name="Glasner J.D."/>
            <person name="Rose D.J."/>
            <person name="Mayhew G.F."/>
            <person name="Evans P.S."/>
            <person name="Gregor J."/>
            <person name="Kirkpatrick H.A."/>
            <person name="Posfai G."/>
            <person name="Hackett J."/>
            <person name="Klink S."/>
            <person name="Boutin A."/>
            <person name="Shao Y."/>
            <person name="Miller L."/>
            <person name="Grotbeck E.J."/>
            <person name="Davis N.W."/>
            <person name="Lim A."/>
            <person name="Dimalanta E.T."/>
            <person name="Potamousis K."/>
            <person name="Apodaca J."/>
            <person name="Anantharaman T.S."/>
            <person name="Lin J."/>
            <person name="Yen G."/>
            <person name="Schwartz D.C."/>
            <person name="Welch R.A."/>
            <person name="Blattner F.R."/>
        </authorList>
    </citation>
    <scope>NUCLEOTIDE SEQUENCE [LARGE SCALE GENOMIC DNA]</scope>
    <source>
        <strain>O157:H7 / EDL933 / ATCC 700927 / EHEC</strain>
    </source>
</reference>
<reference key="2">
    <citation type="journal article" date="2001" name="DNA Res.">
        <title>Complete genome sequence of enterohemorrhagic Escherichia coli O157:H7 and genomic comparison with a laboratory strain K-12.</title>
        <authorList>
            <person name="Hayashi T."/>
            <person name="Makino K."/>
            <person name="Ohnishi M."/>
            <person name="Kurokawa K."/>
            <person name="Ishii K."/>
            <person name="Yokoyama K."/>
            <person name="Han C.-G."/>
            <person name="Ohtsubo E."/>
            <person name="Nakayama K."/>
            <person name="Murata T."/>
            <person name="Tanaka M."/>
            <person name="Tobe T."/>
            <person name="Iida T."/>
            <person name="Takami H."/>
            <person name="Honda T."/>
            <person name="Sasakawa C."/>
            <person name="Ogasawara N."/>
            <person name="Yasunaga T."/>
            <person name="Kuhara S."/>
            <person name="Shiba T."/>
            <person name="Hattori M."/>
            <person name="Shinagawa H."/>
        </authorList>
    </citation>
    <scope>NUCLEOTIDE SEQUENCE [LARGE SCALE GENOMIC DNA]</scope>
    <source>
        <strain>O157:H7 / Sakai / RIMD 0509952 / EHEC</strain>
    </source>
</reference>
<evidence type="ECO:0000255" key="1">
    <source>
        <dbReference type="HAMAP-Rule" id="MF_01267"/>
    </source>
</evidence>